<accession>Q73RJ6</accession>
<name>SYC_TREDE</name>
<organism>
    <name type="scientific">Treponema denticola (strain ATCC 35405 / DSM 14222 / CIP 103919 / JCM 8153 / KCTC 15104)</name>
    <dbReference type="NCBI Taxonomy" id="243275"/>
    <lineage>
        <taxon>Bacteria</taxon>
        <taxon>Pseudomonadati</taxon>
        <taxon>Spirochaetota</taxon>
        <taxon>Spirochaetia</taxon>
        <taxon>Spirochaetales</taxon>
        <taxon>Treponemataceae</taxon>
        <taxon>Treponema</taxon>
    </lineage>
</organism>
<evidence type="ECO:0000255" key="1">
    <source>
        <dbReference type="HAMAP-Rule" id="MF_00041"/>
    </source>
</evidence>
<comment type="catalytic activity">
    <reaction evidence="1">
        <text>tRNA(Cys) + L-cysteine + ATP = L-cysteinyl-tRNA(Cys) + AMP + diphosphate</text>
        <dbReference type="Rhea" id="RHEA:17773"/>
        <dbReference type="Rhea" id="RHEA-COMP:9661"/>
        <dbReference type="Rhea" id="RHEA-COMP:9679"/>
        <dbReference type="ChEBI" id="CHEBI:30616"/>
        <dbReference type="ChEBI" id="CHEBI:33019"/>
        <dbReference type="ChEBI" id="CHEBI:35235"/>
        <dbReference type="ChEBI" id="CHEBI:78442"/>
        <dbReference type="ChEBI" id="CHEBI:78517"/>
        <dbReference type="ChEBI" id="CHEBI:456215"/>
        <dbReference type="EC" id="6.1.1.16"/>
    </reaction>
</comment>
<comment type="cofactor">
    <cofactor evidence="1">
        <name>Zn(2+)</name>
        <dbReference type="ChEBI" id="CHEBI:29105"/>
    </cofactor>
    <text evidence="1">Binds 1 zinc ion per subunit.</text>
</comment>
<comment type="subunit">
    <text evidence="1">Monomer.</text>
</comment>
<comment type="subcellular location">
    <subcellularLocation>
        <location evidence="1">Cytoplasm</location>
    </subcellularLocation>
</comment>
<comment type="similarity">
    <text evidence="1">Belongs to the class-I aminoacyl-tRNA synthetase family.</text>
</comment>
<proteinExistence type="inferred from homology"/>
<feature type="chain" id="PRO_0000159510" description="Cysteine--tRNA ligase">
    <location>
        <begin position="1"/>
        <end position="492"/>
    </location>
</feature>
<feature type="short sequence motif" description="'HIGH' region">
    <location>
        <begin position="31"/>
        <end position="41"/>
    </location>
</feature>
<feature type="short sequence motif" description="'KMSKS' region">
    <location>
        <begin position="279"/>
        <end position="283"/>
    </location>
</feature>
<feature type="binding site" evidence="1">
    <location>
        <position position="29"/>
    </location>
    <ligand>
        <name>Zn(2+)</name>
        <dbReference type="ChEBI" id="CHEBI:29105"/>
    </ligand>
</feature>
<feature type="binding site" evidence="1">
    <location>
        <position position="222"/>
    </location>
    <ligand>
        <name>Zn(2+)</name>
        <dbReference type="ChEBI" id="CHEBI:29105"/>
    </ligand>
</feature>
<feature type="binding site" evidence="1">
    <location>
        <position position="247"/>
    </location>
    <ligand>
        <name>Zn(2+)</name>
        <dbReference type="ChEBI" id="CHEBI:29105"/>
    </ligand>
</feature>
<feature type="binding site" evidence="1">
    <location>
        <position position="251"/>
    </location>
    <ligand>
        <name>Zn(2+)</name>
        <dbReference type="ChEBI" id="CHEBI:29105"/>
    </ligand>
</feature>
<feature type="binding site" evidence="1">
    <location>
        <position position="282"/>
    </location>
    <ligand>
        <name>ATP</name>
        <dbReference type="ChEBI" id="CHEBI:30616"/>
    </ligand>
</feature>
<protein>
    <recommendedName>
        <fullName evidence="1">Cysteine--tRNA ligase</fullName>
        <ecNumber evidence="1">6.1.1.16</ecNumber>
    </recommendedName>
    <alternativeName>
        <fullName evidence="1">Cysteinyl-tRNA synthetase</fullName>
        <shortName evidence="1">CysRS</shortName>
    </alternativeName>
</protein>
<reference key="1">
    <citation type="journal article" date="2004" name="Proc. Natl. Acad. Sci. U.S.A.">
        <title>Comparison of the genome of the oral pathogen Treponema denticola with other spirochete genomes.</title>
        <authorList>
            <person name="Seshadri R."/>
            <person name="Myers G.S.A."/>
            <person name="Tettelin H."/>
            <person name="Eisen J.A."/>
            <person name="Heidelberg J.F."/>
            <person name="Dodson R.J."/>
            <person name="Davidsen T.M."/>
            <person name="DeBoy R.T."/>
            <person name="Fouts D.E."/>
            <person name="Haft D.H."/>
            <person name="Selengut J."/>
            <person name="Ren Q."/>
            <person name="Brinkac L.M."/>
            <person name="Madupu R."/>
            <person name="Kolonay J.F."/>
            <person name="Durkin S.A."/>
            <person name="Daugherty S.C."/>
            <person name="Shetty J."/>
            <person name="Shvartsbeyn A."/>
            <person name="Gebregeorgis E."/>
            <person name="Geer K."/>
            <person name="Tsegaye G."/>
            <person name="Malek J.A."/>
            <person name="Ayodeji B."/>
            <person name="Shatsman S."/>
            <person name="McLeod M.P."/>
            <person name="Smajs D."/>
            <person name="Howell J.K."/>
            <person name="Pal S."/>
            <person name="Amin A."/>
            <person name="Vashisth P."/>
            <person name="McNeill T.Z."/>
            <person name="Xiang Q."/>
            <person name="Sodergren E."/>
            <person name="Baca E."/>
            <person name="Weinstock G.M."/>
            <person name="Norris S.J."/>
            <person name="Fraser C.M."/>
            <person name="Paulsen I.T."/>
        </authorList>
    </citation>
    <scope>NUCLEOTIDE SEQUENCE [LARGE SCALE GENOMIC DNA]</scope>
    <source>
        <strain>ATCC 35405 / DSM 14222 / CIP 103919 / JCM 8153 / KCTC 15104</strain>
    </source>
</reference>
<gene>
    <name evidence="1" type="primary">cysS</name>
    <name type="ordered locus">TDE_0092</name>
</gene>
<dbReference type="EC" id="6.1.1.16" evidence="1"/>
<dbReference type="EMBL" id="AE017226">
    <property type="protein sequence ID" value="AAS10590.1"/>
    <property type="molecule type" value="Genomic_DNA"/>
</dbReference>
<dbReference type="RefSeq" id="NP_970709.1">
    <property type="nucleotide sequence ID" value="NC_002967.9"/>
</dbReference>
<dbReference type="RefSeq" id="WP_002666765.1">
    <property type="nucleotide sequence ID" value="NC_002967.9"/>
</dbReference>
<dbReference type="SMR" id="Q73RJ6"/>
<dbReference type="STRING" id="243275.TDE_0092"/>
<dbReference type="PaxDb" id="243275-TDE_0092"/>
<dbReference type="GeneID" id="2741707"/>
<dbReference type="KEGG" id="tde:TDE_0092"/>
<dbReference type="PATRIC" id="fig|243275.7.peg.93"/>
<dbReference type="eggNOG" id="COG0215">
    <property type="taxonomic scope" value="Bacteria"/>
</dbReference>
<dbReference type="HOGENOM" id="CLU_013528_0_1_12"/>
<dbReference type="OrthoDB" id="9815130at2"/>
<dbReference type="Proteomes" id="UP000008212">
    <property type="component" value="Chromosome"/>
</dbReference>
<dbReference type="GO" id="GO:0005829">
    <property type="term" value="C:cytosol"/>
    <property type="evidence" value="ECO:0007669"/>
    <property type="project" value="TreeGrafter"/>
</dbReference>
<dbReference type="GO" id="GO:0005524">
    <property type="term" value="F:ATP binding"/>
    <property type="evidence" value="ECO:0007669"/>
    <property type="project" value="UniProtKB-UniRule"/>
</dbReference>
<dbReference type="GO" id="GO:0004817">
    <property type="term" value="F:cysteine-tRNA ligase activity"/>
    <property type="evidence" value="ECO:0007669"/>
    <property type="project" value="UniProtKB-UniRule"/>
</dbReference>
<dbReference type="GO" id="GO:0008270">
    <property type="term" value="F:zinc ion binding"/>
    <property type="evidence" value="ECO:0007669"/>
    <property type="project" value="UniProtKB-UniRule"/>
</dbReference>
<dbReference type="GO" id="GO:0006423">
    <property type="term" value="P:cysteinyl-tRNA aminoacylation"/>
    <property type="evidence" value="ECO:0007669"/>
    <property type="project" value="UniProtKB-UniRule"/>
</dbReference>
<dbReference type="CDD" id="cd00672">
    <property type="entry name" value="CysRS_core"/>
    <property type="match status" value="1"/>
</dbReference>
<dbReference type="Gene3D" id="1.20.120.1910">
    <property type="entry name" value="Cysteine-tRNA ligase, C-terminal anti-codon recognition domain"/>
    <property type="match status" value="1"/>
</dbReference>
<dbReference type="Gene3D" id="3.40.50.620">
    <property type="entry name" value="HUPs"/>
    <property type="match status" value="1"/>
</dbReference>
<dbReference type="HAMAP" id="MF_00041">
    <property type="entry name" value="Cys_tRNA_synth"/>
    <property type="match status" value="1"/>
</dbReference>
<dbReference type="InterPro" id="IPR015803">
    <property type="entry name" value="Cys-tRNA-ligase"/>
</dbReference>
<dbReference type="InterPro" id="IPR015273">
    <property type="entry name" value="Cys-tRNA-synt_Ia_DALR"/>
</dbReference>
<dbReference type="InterPro" id="IPR024909">
    <property type="entry name" value="Cys-tRNA/MSH_ligase"/>
</dbReference>
<dbReference type="InterPro" id="IPR014729">
    <property type="entry name" value="Rossmann-like_a/b/a_fold"/>
</dbReference>
<dbReference type="InterPro" id="IPR032678">
    <property type="entry name" value="tRNA-synt_1_cat_dom"/>
</dbReference>
<dbReference type="InterPro" id="IPR009080">
    <property type="entry name" value="tRNAsynth_Ia_anticodon-bd"/>
</dbReference>
<dbReference type="NCBIfam" id="TIGR00435">
    <property type="entry name" value="cysS"/>
    <property type="match status" value="1"/>
</dbReference>
<dbReference type="NCBIfam" id="NF011108">
    <property type="entry name" value="PRK14536.1"/>
    <property type="match status" value="1"/>
</dbReference>
<dbReference type="PANTHER" id="PTHR10890:SF3">
    <property type="entry name" value="CYSTEINE--TRNA LIGASE, CYTOPLASMIC"/>
    <property type="match status" value="1"/>
</dbReference>
<dbReference type="PANTHER" id="PTHR10890">
    <property type="entry name" value="CYSTEINYL-TRNA SYNTHETASE"/>
    <property type="match status" value="1"/>
</dbReference>
<dbReference type="Pfam" id="PF01406">
    <property type="entry name" value="tRNA-synt_1e"/>
    <property type="match status" value="1"/>
</dbReference>
<dbReference type="PRINTS" id="PR00983">
    <property type="entry name" value="TRNASYNTHCYS"/>
</dbReference>
<dbReference type="SMART" id="SM00840">
    <property type="entry name" value="DALR_2"/>
    <property type="match status" value="1"/>
</dbReference>
<dbReference type="SUPFAM" id="SSF47323">
    <property type="entry name" value="Anticodon-binding domain of a subclass of class I aminoacyl-tRNA synthetases"/>
    <property type="match status" value="1"/>
</dbReference>
<dbReference type="SUPFAM" id="SSF52374">
    <property type="entry name" value="Nucleotidylyl transferase"/>
    <property type="match status" value="1"/>
</dbReference>
<keyword id="KW-0030">Aminoacyl-tRNA synthetase</keyword>
<keyword id="KW-0067">ATP-binding</keyword>
<keyword id="KW-0963">Cytoplasm</keyword>
<keyword id="KW-0436">Ligase</keyword>
<keyword id="KW-0479">Metal-binding</keyword>
<keyword id="KW-0547">Nucleotide-binding</keyword>
<keyword id="KW-0648">Protein biosynthesis</keyword>
<keyword id="KW-1185">Reference proteome</keyword>
<keyword id="KW-0862">Zinc</keyword>
<sequence length="492" mass="55951">MSLKLHNTLGNKKEEFIPIHEGKAGVYGCGPTVYDYAHIGNLRTYVFQDILVKTLRFLGYDVTHVMNITDVGHLTDDEDSGEDKMVKSAEERGKSVLEIAEFYTKAFFNDTERLNIERPGIVCKATEHINEMIELIKRIEANGHTYMAGGNLYYDISTFPKYGELANINLEDLKAGARIEIDKNKRNPHDFVLWFTKSKFENQALVWDSPWGRGYPGWHIECSAMSMKYLGEQIDIHKGGIDHIRVHHTNEIAQSEGATGKKWVNYWLHNEFLVMNKGKMSKSAGSFIILEDVINKGFSALDYRFLLLGGHYRSQLTFSWEAMETAKNGRKNLNNRVAKWLDGLSDSEIMEYAALTENLNLKSAKDMIKNEKARSCFDNFIAAMEDDLSTPKALSELQLLIKEKDIPQKDVLTVLAAMDSILGIKLIEESFNTLKDKGSIEIDESEILKLIEERASAKLDKNYKLADEIRDKLKGMGIILEDQAGKTTWKKL</sequence>